<feature type="chain" id="PRO_0000141459" description="4-hydroxy-tetrahydrodipicolinate reductase">
    <location>
        <begin position="1"/>
        <end position="269"/>
    </location>
</feature>
<feature type="active site" description="Proton donor/acceptor" evidence="1">
    <location>
        <position position="156"/>
    </location>
</feature>
<feature type="active site" description="Proton donor" evidence="1">
    <location>
        <position position="160"/>
    </location>
</feature>
<feature type="binding site" evidence="1">
    <location>
        <begin position="10"/>
        <end position="15"/>
    </location>
    <ligand>
        <name>NAD(+)</name>
        <dbReference type="ChEBI" id="CHEBI:57540"/>
    </ligand>
</feature>
<feature type="binding site" evidence="1">
    <location>
        <position position="36"/>
    </location>
    <ligand>
        <name>NAD(+)</name>
        <dbReference type="ChEBI" id="CHEBI:57540"/>
    </ligand>
</feature>
<feature type="binding site" evidence="1">
    <location>
        <begin position="99"/>
        <end position="101"/>
    </location>
    <ligand>
        <name>NAD(+)</name>
        <dbReference type="ChEBI" id="CHEBI:57540"/>
    </ligand>
</feature>
<feature type="binding site" evidence="1">
    <location>
        <begin position="123"/>
        <end position="126"/>
    </location>
    <ligand>
        <name>NAD(+)</name>
        <dbReference type="ChEBI" id="CHEBI:57540"/>
    </ligand>
</feature>
<feature type="binding site" evidence="1">
    <location>
        <position position="157"/>
    </location>
    <ligand>
        <name>(S)-2,3,4,5-tetrahydrodipicolinate</name>
        <dbReference type="ChEBI" id="CHEBI:16845"/>
    </ligand>
</feature>
<feature type="binding site" evidence="1">
    <location>
        <begin position="166"/>
        <end position="167"/>
    </location>
    <ligand>
        <name>(S)-2,3,4,5-tetrahydrodipicolinate</name>
        <dbReference type="ChEBI" id="CHEBI:16845"/>
    </ligand>
</feature>
<sequence>MTPLKIAIAGANGRMGRVLVEAVNNHPDTVLSGALEHSGSEALGLDAGYAVGLKTGIAISDDVDTVLAQSDVLIDFTRPEPTLKHLQKCVEKQVNIIIGTTGFDDAGKAAIRAAAEKTGIVFAANFSVGVNLTFHILDTVALVLNEGYDIEIIEGHHRHKVDAPSGTALRMGEVIAGALGRDLKQCAVYGREGHTGPRDPSTIGFATVRAGDIVGDHTALFATDGERVEITHKASSRMTFAAGAVRAAVWVNGKTGLYDMQDVLGLNNR</sequence>
<organism>
    <name type="scientific">Neisseria meningitidis serogroup A / serotype 4A (strain DSM 15465 / Z2491)</name>
    <dbReference type="NCBI Taxonomy" id="122587"/>
    <lineage>
        <taxon>Bacteria</taxon>
        <taxon>Pseudomonadati</taxon>
        <taxon>Pseudomonadota</taxon>
        <taxon>Betaproteobacteria</taxon>
        <taxon>Neisseriales</taxon>
        <taxon>Neisseriaceae</taxon>
        <taxon>Neisseria</taxon>
    </lineage>
</organism>
<comment type="function">
    <text evidence="1">Catalyzes the conversion of 4-hydroxy-tetrahydrodipicolinate (HTPA) to tetrahydrodipicolinate.</text>
</comment>
<comment type="catalytic activity">
    <reaction evidence="1">
        <text>(S)-2,3,4,5-tetrahydrodipicolinate + NAD(+) + H2O = (2S,4S)-4-hydroxy-2,3,4,5-tetrahydrodipicolinate + NADH + H(+)</text>
        <dbReference type="Rhea" id="RHEA:35323"/>
        <dbReference type="ChEBI" id="CHEBI:15377"/>
        <dbReference type="ChEBI" id="CHEBI:15378"/>
        <dbReference type="ChEBI" id="CHEBI:16845"/>
        <dbReference type="ChEBI" id="CHEBI:57540"/>
        <dbReference type="ChEBI" id="CHEBI:57945"/>
        <dbReference type="ChEBI" id="CHEBI:67139"/>
        <dbReference type="EC" id="1.17.1.8"/>
    </reaction>
</comment>
<comment type="catalytic activity">
    <reaction evidence="1">
        <text>(S)-2,3,4,5-tetrahydrodipicolinate + NADP(+) + H2O = (2S,4S)-4-hydroxy-2,3,4,5-tetrahydrodipicolinate + NADPH + H(+)</text>
        <dbReference type="Rhea" id="RHEA:35331"/>
        <dbReference type="ChEBI" id="CHEBI:15377"/>
        <dbReference type="ChEBI" id="CHEBI:15378"/>
        <dbReference type="ChEBI" id="CHEBI:16845"/>
        <dbReference type="ChEBI" id="CHEBI:57783"/>
        <dbReference type="ChEBI" id="CHEBI:58349"/>
        <dbReference type="ChEBI" id="CHEBI:67139"/>
        <dbReference type="EC" id="1.17.1.8"/>
    </reaction>
</comment>
<comment type="pathway">
    <text evidence="1">Amino-acid biosynthesis; L-lysine biosynthesis via DAP pathway; (S)-tetrahydrodipicolinate from L-aspartate: step 4/4.</text>
</comment>
<comment type="subcellular location">
    <subcellularLocation>
        <location evidence="1">Cytoplasm</location>
    </subcellularLocation>
</comment>
<comment type="similarity">
    <text evidence="1">Belongs to the DapB family.</text>
</comment>
<comment type="caution">
    <text evidence="2">Was originally thought to be a dihydrodipicolinate reductase (DHDPR), catalyzing the conversion of dihydrodipicolinate to tetrahydrodipicolinate. However, it was shown in E.coli that the substrate of the enzymatic reaction is not dihydrodipicolinate (DHDP) but in fact (2S,4S)-4-hydroxy-2,3,4,5-tetrahydrodipicolinic acid (HTPA), the product released by the DapA-catalyzed reaction.</text>
</comment>
<dbReference type="EC" id="1.17.1.8" evidence="1"/>
<dbReference type="EMBL" id="AL157959">
    <property type="protein sequence ID" value="CAM07386.1"/>
    <property type="molecule type" value="Genomic_DNA"/>
</dbReference>
<dbReference type="PIR" id="A81998">
    <property type="entry name" value="A81998"/>
</dbReference>
<dbReference type="RefSeq" id="WP_002246737.1">
    <property type="nucleotide sequence ID" value="NC_003116.1"/>
</dbReference>
<dbReference type="SMR" id="Q9JX48"/>
<dbReference type="EnsemblBacteria" id="CAM07386">
    <property type="protein sequence ID" value="CAM07386"/>
    <property type="gene ID" value="NMA0066"/>
</dbReference>
<dbReference type="GeneID" id="93387281"/>
<dbReference type="KEGG" id="nma:NMA0066"/>
<dbReference type="HOGENOM" id="CLU_047479_2_1_4"/>
<dbReference type="UniPathway" id="UPA00034">
    <property type="reaction ID" value="UER00018"/>
</dbReference>
<dbReference type="Proteomes" id="UP000000626">
    <property type="component" value="Chromosome"/>
</dbReference>
<dbReference type="GO" id="GO:0005829">
    <property type="term" value="C:cytosol"/>
    <property type="evidence" value="ECO:0007669"/>
    <property type="project" value="TreeGrafter"/>
</dbReference>
<dbReference type="GO" id="GO:0008839">
    <property type="term" value="F:4-hydroxy-tetrahydrodipicolinate reductase"/>
    <property type="evidence" value="ECO:0007669"/>
    <property type="project" value="UniProtKB-EC"/>
</dbReference>
<dbReference type="GO" id="GO:0051287">
    <property type="term" value="F:NAD binding"/>
    <property type="evidence" value="ECO:0007669"/>
    <property type="project" value="UniProtKB-UniRule"/>
</dbReference>
<dbReference type="GO" id="GO:0050661">
    <property type="term" value="F:NADP binding"/>
    <property type="evidence" value="ECO:0007669"/>
    <property type="project" value="UniProtKB-UniRule"/>
</dbReference>
<dbReference type="GO" id="GO:0016726">
    <property type="term" value="F:oxidoreductase activity, acting on CH or CH2 groups, NAD or NADP as acceptor"/>
    <property type="evidence" value="ECO:0007669"/>
    <property type="project" value="UniProtKB-UniRule"/>
</dbReference>
<dbReference type="GO" id="GO:0019877">
    <property type="term" value="P:diaminopimelate biosynthetic process"/>
    <property type="evidence" value="ECO:0007669"/>
    <property type="project" value="UniProtKB-UniRule"/>
</dbReference>
<dbReference type="GO" id="GO:0009089">
    <property type="term" value="P:lysine biosynthetic process via diaminopimelate"/>
    <property type="evidence" value="ECO:0007669"/>
    <property type="project" value="UniProtKB-UniRule"/>
</dbReference>
<dbReference type="CDD" id="cd02274">
    <property type="entry name" value="DHDPR_N"/>
    <property type="match status" value="1"/>
</dbReference>
<dbReference type="FunFam" id="3.30.360.10:FF:000004">
    <property type="entry name" value="4-hydroxy-tetrahydrodipicolinate reductase"/>
    <property type="match status" value="1"/>
</dbReference>
<dbReference type="FunFam" id="3.40.50.720:FF:000048">
    <property type="entry name" value="4-hydroxy-tetrahydrodipicolinate reductase"/>
    <property type="match status" value="1"/>
</dbReference>
<dbReference type="Gene3D" id="3.30.360.10">
    <property type="entry name" value="Dihydrodipicolinate Reductase, domain 2"/>
    <property type="match status" value="1"/>
</dbReference>
<dbReference type="Gene3D" id="3.40.50.720">
    <property type="entry name" value="NAD(P)-binding Rossmann-like Domain"/>
    <property type="match status" value="1"/>
</dbReference>
<dbReference type="HAMAP" id="MF_00102">
    <property type="entry name" value="DapB"/>
    <property type="match status" value="1"/>
</dbReference>
<dbReference type="InterPro" id="IPR022663">
    <property type="entry name" value="DapB_C"/>
</dbReference>
<dbReference type="InterPro" id="IPR000846">
    <property type="entry name" value="DapB_N"/>
</dbReference>
<dbReference type="InterPro" id="IPR022664">
    <property type="entry name" value="DapB_N_CS"/>
</dbReference>
<dbReference type="InterPro" id="IPR023940">
    <property type="entry name" value="DHDPR_bac"/>
</dbReference>
<dbReference type="InterPro" id="IPR036291">
    <property type="entry name" value="NAD(P)-bd_dom_sf"/>
</dbReference>
<dbReference type="NCBIfam" id="TIGR00036">
    <property type="entry name" value="dapB"/>
    <property type="match status" value="1"/>
</dbReference>
<dbReference type="PANTHER" id="PTHR20836:SF0">
    <property type="entry name" value="4-HYDROXY-TETRAHYDRODIPICOLINATE REDUCTASE 1, CHLOROPLASTIC-RELATED"/>
    <property type="match status" value="1"/>
</dbReference>
<dbReference type="PANTHER" id="PTHR20836">
    <property type="entry name" value="DIHYDRODIPICOLINATE REDUCTASE"/>
    <property type="match status" value="1"/>
</dbReference>
<dbReference type="Pfam" id="PF05173">
    <property type="entry name" value="DapB_C"/>
    <property type="match status" value="1"/>
</dbReference>
<dbReference type="Pfam" id="PF01113">
    <property type="entry name" value="DapB_N"/>
    <property type="match status" value="1"/>
</dbReference>
<dbReference type="PIRSF" id="PIRSF000161">
    <property type="entry name" value="DHPR"/>
    <property type="match status" value="1"/>
</dbReference>
<dbReference type="SUPFAM" id="SSF55347">
    <property type="entry name" value="Glyceraldehyde-3-phosphate dehydrogenase-like, C-terminal domain"/>
    <property type="match status" value="1"/>
</dbReference>
<dbReference type="SUPFAM" id="SSF51735">
    <property type="entry name" value="NAD(P)-binding Rossmann-fold domains"/>
    <property type="match status" value="1"/>
</dbReference>
<dbReference type="PROSITE" id="PS01298">
    <property type="entry name" value="DAPB"/>
    <property type="match status" value="1"/>
</dbReference>
<proteinExistence type="inferred from homology"/>
<reference key="1">
    <citation type="journal article" date="2000" name="Nature">
        <title>Complete DNA sequence of a serogroup A strain of Neisseria meningitidis Z2491.</title>
        <authorList>
            <person name="Parkhill J."/>
            <person name="Achtman M."/>
            <person name="James K.D."/>
            <person name="Bentley S.D."/>
            <person name="Churcher C.M."/>
            <person name="Klee S.R."/>
            <person name="Morelli G."/>
            <person name="Basham D."/>
            <person name="Brown D."/>
            <person name="Chillingworth T."/>
            <person name="Davies R.M."/>
            <person name="Davis P."/>
            <person name="Devlin K."/>
            <person name="Feltwell T."/>
            <person name="Hamlin N."/>
            <person name="Holroyd S."/>
            <person name="Jagels K."/>
            <person name="Leather S."/>
            <person name="Moule S."/>
            <person name="Mungall K.L."/>
            <person name="Quail M.A."/>
            <person name="Rajandream M.A."/>
            <person name="Rutherford K.M."/>
            <person name="Simmonds M."/>
            <person name="Skelton J."/>
            <person name="Whitehead S."/>
            <person name="Spratt B.G."/>
            <person name="Barrell B.G."/>
        </authorList>
    </citation>
    <scope>NUCLEOTIDE SEQUENCE [LARGE SCALE GENOMIC DNA]</scope>
    <source>
        <strain>DSM 15465 / Z2491</strain>
    </source>
</reference>
<protein>
    <recommendedName>
        <fullName evidence="1">4-hydroxy-tetrahydrodipicolinate reductase</fullName>
        <shortName evidence="1">HTPA reductase</shortName>
        <ecNumber evidence="1">1.17.1.8</ecNumber>
    </recommendedName>
</protein>
<name>DAPB_NEIMA</name>
<accession>Q9JX48</accession>
<accession>A1INS9</accession>
<gene>
    <name evidence="1" type="primary">dapB</name>
    <name type="ordered locus">NMA0066</name>
</gene>
<evidence type="ECO:0000255" key="1">
    <source>
        <dbReference type="HAMAP-Rule" id="MF_00102"/>
    </source>
</evidence>
<evidence type="ECO:0000305" key="2"/>
<keyword id="KW-0028">Amino-acid biosynthesis</keyword>
<keyword id="KW-0963">Cytoplasm</keyword>
<keyword id="KW-0220">Diaminopimelate biosynthesis</keyword>
<keyword id="KW-0457">Lysine biosynthesis</keyword>
<keyword id="KW-0520">NAD</keyword>
<keyword id="KW-0521">NADP</keyword>
<keyword id="KW-0560">Oxidoreductase</keyword>